<evidence type="ECO:0000250" key="1">
    <source>
        <dbReference type="UniProtKB" id="Q5T2D3"/>
    </source>
</evidence>
<evidence type="ECO:0000250" key="2">
    <source>
        <dbReference type="UniProtKB" id="Q9UK80"/>
    </source>
</evidence>
<evidence type="ECO:0000255" key="3">
    <source>
        <dbReference type="PROSITE-ProRule" id="PRU10092"/>
    </source>
</evidence>
<evidence type="ECO:0000255" key="4">
    <source>
        <dbReference type="PROSITE-ProRule" id="PRU10093"/>
    </source>
</evidence>
<evidence type="ECO:0000256" key="5">
    <source>
        <dbReference type="SAM" id="MobiDB-lite"/>
    </source>
</evidence>
<evidence type="ECO:0000305" key="6"/>
<protein>
    <recommendedName>
        <fullName>Ubiquitin carboxyl-terminal hydrolase 21</fullName>
        <ecNumber evidence="2">3.4.19.12</ecNumber>
    </recommendedName>
    <alternativeName>
        <fullName>Deubiquitinating enzyme 21</fullName>
    </alternativeName>
    <alternativeName>
        <fullName>Ubiquitin thioesterase 21</fullName>
    </alternativeName>
    <alternativeName>
        <fullName>Ubiquitin-specific-processing protease 21</fullName>
    </alternativeName>
</protein>
<dbReference type="EC" id="3.4.19.12" evidence="2"/>
<dbReference type="EMBL" id="BC105488">
    <property type="protein sequence ID" value="AAI05489.1"/>
    <property type="molecule type" value="mRNA"/>
</dbReference>
<dbReference type="RefSeq" id="NP_001039841.1">
    <property type="nucleotide sequence ID" value="NM_001046376.2"/>
</dbReference>
<dbReference type="SMR" id="Q2KJ72"/>
<dbReference type="FunCoup" id="Q2KJ72">
    <property type="interactions" value="1242"/>
</dbReference>
<dbReference type="STRING" id="9913.ENSBTAP00000062274"/>
<dbReference type="MEROPS" id="C19.034"/>
<dbReference type="PaxDb" id="9913-ENSBTAP00000029184"/>
<dbReference type="GeneID" id="534273"/>
<dbReference type="KEGG" id="bta:534273"/>
<dbReference type="CTD" id="27005"/>
<dbReference type="eggNOG" id="KOG1868">
    <property type="taxonomic scope" value="Eukaryota"/>
</dbReference>
<dbReference type="InParanoid" id="Q2KJ72"/>
<dbReference type="OrthoDB" id="265306at2759"/>
<dbReference type="Proteomes" id="UP000009136">
    <property type="component" value="Unplaced"/>
</dbReference>
<dbReference type="GO" id="GO:0005737">
    <property type="term" value="C:cytoplasm"/>
    <property type="evidence" value="ECO:0000318"/>
    <property type="project" value="GO_Central"/>
</dbReference>
<dbReference type="GO" id="GO:0005634">
    <property type="term" value="C:nucleus"/>
    <property type="evidence" value="ECO:0007669"/>
    <property type="project" value="UniProtKB-SubCell"/>
</dbReference>
<dbReference type="GO" id="GO:0004843">
    <property type="term" value="F:cysteine-type deubiquitinase activity"/>
    <property type="evidence" value="ECO:0000250"/>
    <property type="project" value="UniProtKB"/>
</dbReference>
<dbReference type="GO" id="GO:0008234">
    <property type="term" value="F:cysteine-type peptidase activity"/>
    <property type="evidence" value="ECO:0000250"/>
    <property type="project" value="UniProtKB"/>
</dbReference>
<dbReference type="GO" id="GO:0019784">
    <property type="term" value="F:deNEDDylase activity"/>
    <property type="evidence" value="ECO:0000250"/>
    <property type="project" value="UniProtKB"/>
</dbReference>
<dbReference type="GO" id="GO:0046872">
    <property type="term" value="F:metal ion binding"/>
    <property type="evidence" value="ECO:0007669"/>
    <property type="project" value="UniProtKB-KW"/>
</dbReference>
<dbReference type="GO" id="GO:0003713">
    <property type="term" value="F:transcription coactivator activity"/>
    <property type="evidence" value="ECO:0000250"/>
    <property type="project" value="UniProtKB"/>
</dbReference>
<dbReference type="GO" id="GO:0016579">
    <property type="term" value="P:protein deubiquitination"/>
    <property type="evidence" value="ECO:0007669"/>
    <property type="project" value="InterPro"/>
</dbReference>
<dbReference type="GO" id="GO:0006508">
    <property type="term" value="P:proteolysis"/>
    <property type="evidence" value="ECO:0007669"/>
    <property type="project" value="UniProtKB-KW"/>
</dbReference>
<dbReference type="GO" id="GO:0045815">
    <property type="term" value="P:transcription initiation-coupled chromatin remodeling"/>
    <property type="evidence" value="ECO:0000250"/>
    <property type="project" value="UniProtKB"/>
</dbReference>
<dbReference type="CDD" id="cd02674">
    <property type="entry name" value="Peptidase_C19R"/>
    <property type="match status" value="1"/>
</dbReference>
<dbReference type="FunFam" id="3.90.70.10:FF:000058">
    <property type="entry name" value="Ubiquitin carboxyl-terminal hydrolase 21"/>
    <property type="match status" value="1"/>
</dbReference>
<dbReference type="Gene3D" id="3.90.70.10">
    <property type="entry name" value="Cysteine proteinases"/>
    <property type="match status" value="1"/>
</dbReference>
<dbReference type="InterPro" id="IPR038765">
    <property type="entry name" value="Papain-like_cys_pep_sf"/>
</dbReference>
<dbReference type="InterPro" id="IPR001394">
    <property type="entry name" value="Peptidase_C19_UCH"/>
</dbReference>
<dbReference type="InterPro" id="IPR050185">
    <property type="entry name" value="Ub_carboxyl-term_hydrolase"/>
</dbReference>
<dbReference type="InterPro" id="IPR018200">
    <property type="entry name" value="USP_CS"/>
</dbReference>
<dbReference type="InterPro" id="IPR028889">
    <property type="entry name" value="USP_dom"/>
</dbReference>
<dbReference type="PANTHER" id="PTHR21646">
    <property type="entry name" value="UBIQUITIN CARBOXYL-TERMINAL HYDROLASE"/>
    <property type="match status" value="1"/>
</dbReference>
<dbReference type="PANTHER" id="PTHR21646:SF6">
    <property type="entry name" value="UBIQUITIN CARBOXYL-TERMINAL HYDROLASE 21"/>
    <property type="match status" value="1"/>
</dbReference>
<dbReference type="Pfam" id="PF00443">
    <property type="entry name" value="UCH"/>
    <property type="match status" value="1"/>
</dbReference>
<dbReference type="SUPFAM" id="SSF54001">
    <property type="entry name" value="Cysteine proteinases"/>
    <property type="match status" value="1"/>
</dbReference>
<dbReference type="PROSITE" id="PS00972">
    <property type="entry name" value="USP_1"/>
    <property type="match status" value="1"/>
</dbReference>
<dbReference type="PROSITE" id="PS00973">
    <property type="entry name" value="USP_2"/>
    <property type="match status" value="1"/>
</dbReference>
<dbReference type="PROSITE" id="PS50235">
    <property type="entry name" value="USP_3"/>
    <property type="match status" value="1"/>
</dbReference>
<keyword id="KW-0010">Activator</keyword>
<keyword id="KW-0156">Chromatin regulator</keyword>
<keyword id="KW-0963">Cytoplasm</keyword>
<keyword id="KW-0378">Hydrolase</keyword>
<keyword id="KW-0479">Metal-binding</keyword>
<keyword id="KW-0539">Nucleus</keyword>
<keyword id="KW-0645">Protease</keyword>
<keyword id="KW-1185">Reference proteome</keyword>
<keyword id="KW-0788">Thiol protease</keyword>
<keyword id="KW-0804">Transcription</keyword>
<keyword id="KW-0805">Transcription regulation</keyword>
<keyword id="KW-0833">Ubl conjugation pathway</keyword>
<keyword id="KW-0862">Zinc</keyword>
<gene>
    <name type="primary">USP21</name>
</gene>
<proteinExistence type="evidence at transcript level"/>
<feature type="chain" id="PRO_0000367508" description="Ubiquitin carboxyl-terminal hydrolase 21">
    <location>
        <begin position="1"/>
        <end position="565"/>
    </location>
</feature>
<feature type="domain" description="USP">
    <location>
        <begin position="212"/>
        <end position="558"/>
    </location>
</feature>
<feature type="region of interest" description="Disordered" evidence="5">
    <location>
        <begin position="1"/>
        <end position="103"/>
    </location>
</feature>
<feature type="region of interest" description="Disordered" evidence="5">
    <location>
        <begin position="109"/>
        <end position="128"/>
    </location>
</feature>
<feature type="region of interest" description="Disordered" evidence="5">
    <location>
        <begin position="142"/>
        <end position="163"/>
    </location>
</feature>
<feature type="short sequence motif" description="Nuclear export signal" evidence="2">
    <location>
        <begin position="134"/>
        <end position="152"/>
    </location>
</feature>
<feature type="compositionally biased region" description="Basic and acidic residues" evidence="5">
    <location>
        <begin position="1"/>
        <end position="14"/>
    </location>
</feature>
<feature type="compositionally biased region" description="Pro residues" evidence="5">
    <location>
        <begin position="42"/>
        <end position="57"/>
    </location>
</feature>
<feature type="compositionally biased region" description="Basic and acidic residues" evidence="5">
    <location>
        <begin position="58"/>
        <end position="70"/>
    </location>
</feature>
<feature type="compositionally biased region" description="Low complexity" evidence="5">
    <location>
        <begin position="71"/>
        <end position="82"/>
    </location>
</feature>
<feature type="active site" description="Nucleophile" evidence="3 4">
    <location>
        <position position="221"/>
    </location>
</feature>
<feature type="active site" description="Proton acceptor" evidence="3 4">
    <location>
        <position position="518"/>
    </location>
</feature>
<feature type="binding site" evidence="2">
    <location>
        <position position="384"/>
    </location>
    <ligand>
        <name>Zn(2+)</name>
        <dbReference type="ChEBI" id="CHEBI:29105"/>
    </ligand>
</feature>
<feature type="binding site" evidence="2">
    <location>
        <position position="387"/>
    </location>
    <ligand>
        <name>Zn(2+)</name>
        <dbReference type="ChEBI" id="CHEBI:29105"/>
    </ligand>
</feature>
<feature type="binding site" evidence="2">
    <location>
        <position position="437"/>
    </location>
    <ligand>
        <name>Zn(2+)</name>
        <dbReference type="ChEBI" id="CHEBI:29105"/>
    </ligand>
</feature>
<feature type="binding site" evidence="2">
    <location>
        <position position="440"/>
    </location>
    <ligand>
        <name>Zn(2+)</name>
        <dbReference type="ChEBI" id="CHEBI:29105"/>
    </ligand>
</feature>
<comment type="function">
    <text evidence="1">Deubiquitinating enzyme that hydrolyzes 'Lys-6'- and 'Lys-11'-linked polyubiquitin. Also hydrolyzes heterotypic (mixed and branched) and homotypic chains. Important regulator of energy metabolism. Glucose and fatty acids trigger its nuclear translocation by CBP-dependent acetylation. In the nucleus, deubiquitinates and stabilizes the nuclear receptor PPARD regulating the expression of various genes involved in glucose and lipid metabolism and oxidative phosphorylation. Also acts as a negative regulator of the ribosome quality control (RQC) by mediating deubiquitination of 40S ribosomal proteins RPS10/eS10 and RPS20/uS10, thereby antagonizing ZNF598-mediated 40S ubiquitination.</text>
</comment>
<comment type="catalytic activity">
    <reaction evidence="2">
        <text>Thiol-dependent hydrolysis of ester, thioester, amide, peptide and isopeptide bonds formed by the C-terminal Gly of ubiquitin (a 76-residue protein attached to proteins as an intracellular targeting signal).</text>
        <dbReference type="EC" id="3.4.19.12"/>
    </reaction>
</comment>
<comment type="subunit">
    <text evidence="2">Interacts with BEND3.</text>
</comment>
<comment type="subcellular location">
    <subcellularLocation>
        <location evidence="2">Cytoplasm</location>
    </subcellularLocation>
    <subcellularLocation>
        <location evidence="2">Nucleus</location>
    </subcellularLocation>
</comment>
<comment type="similarity">
    <text evidence="6">Belongs to the peptidase C19 family. USP21 subfamily.</text>
</comment>
<reference key="1">
    <citation type="submission" date="2005-09" db="EMBL/GenBank/DDBJ databases">
        <authorList>
            <consortium name="NIH - Mammalian Gene Collection (MGC) project"/>
        </authorList>
    </citation>
    <scope>NUCLEOTIDE SEQUENCE [LARGE SCALE MRNA]</scope>
    <source>
        <strain>Hereford</strain>
        <tissue>Thymus</tissue>
    </source>
</reference>
<name>UBP21_BOVIN</name>
<sequence length="565" mass="62619">MPQASEHRLGRTREPPLNIQPRVGSKLPFAPRARSKERRNPAPGPNPMLRPLPPRPGPPEERLKKLELGRGRTSGPRPSGPLRADHGVPLPGSPPPTVALPLPSRTNLARSKSVSSGDLRPMGIALGGHRGTGELGAALSRLALRPEPPPLRRSTSLRRLGGFPGPPTLFSIRTEPPTPHGSFHVISARPSEPFYSDDKMAHHTLLLGSGHVGLRNLGNTCFLNALLQCLSSTRPLRDFCLRRDFRQEVPGGGRAQELTEAFADVIGALWHPDSCEAVNPTRFRAVFQKYVPSFSGYSQQDAQEFLKLLMERLHLEINRRGRRAPPILASSPAPHPPRLGGALLEEPELSDDDRANLMWKRYLEREDSKIVDLFVGQLKSCLKCQACGYRSTTFEVFCDLSLPIPKKGFAGGKVSLRDCFNLFTKEEELESENAPVCDRCRQKTRSTKKLTVQRFPRILVLHLNRFSASRGSIKKSSVGVDFPLQRLSLGDFASDKAGSPVYQLYALCNHSGSVHYGHYTALCRCQTGWHVYNDSRVSPVSENQVASSEGYVLFYQLMQEPPRCL</sequence>
<accession>Q2KJ72</accession>
<organism>
    <name type="scientific">Bos taurus</name>
    <name type="common">Bovine</name>
    <dbReference type="NCBI Taxonomy" id="9913"/>
    <lineage>
        <taxon>Eukaryota</taxon>
        <taxon>Metazoa</taxon>
        <taxon>Chordata</taxon>
        <taxon>Craniata</taxon>
        <taxon>Vertebrata</taxon>
        <taxon>Euteleostomi</taxon>
        <taxon>Mammalia</taxon>
        <taxon>Eutheria</taxon>
        <taxon>Laurasiatheria</taxon>
        <taxon>Artiodactyla</taxon>
        <taxon>Ruminantia</taxon>
        <taxon>Pecora</taxon>
        <taxon>Bovidae</taxon>
        <taxon>Bovinae</taxon>
        <taxon>Bos</taxon>
    </lineage>
</organism>